<evidence type="ECO:0000250" key="1"/>
<evidence type="ECO:0000305" key="2"/>
<accession>Q56109</accession>
<protein>
    <recommendedName>
        <fullName>Protein NrdI</fullName>
    </recommendedName>
</protein>
<feature type="chain" id="PRO_0000164332" description="Protein NrdI">
    <location>
        <begin position="1"/>
        <end position="136"/>
    </location>
</feature>
<keyword id="KW-1185">Reference proteome</keyword>
<gene>
    <name type="primary">nrdI</name>
    <name type="ordered locus">STM2806</name>
</gene>
<proteinExistence type="inferred from homology"/>
<reference key="1">
    <citation type="journal article" date="1996" name="Mol. Microbiol.">
        <title>Promoter identification and expression analysis of Salmonella typhimurium and Escherichia coli nrdEF operons encoding one of two class I ribonucleotide reductases present in both bacteria.</title>
        <authorList>
            <person name="Jordan A."/>
            <person name="Aragall E."/>
            <person name="Gibert I."/>
            <person name="Barbe J."/>
        </authorList>
    </citation>
    <scope>NUCLEOTIDE SEQUENCE [GENOMIC DNA]</scope>
    <source>
        <strain>LT2</strain>
    </source>
</reference>
<reference key="2">
    <citation type="journal article" date="2001" name="Nature">
        <title>Complete genome sequence of Salmonella enterica serovar Typhimurium LT2.</title>
        <authorList>
            <person name="McClelland M."/>
            <person name="Sanderson K.E."/>
            <person name="Spieth J."/>
            <person name="Clifton S.W."/>
            <person name="Latreille P."/>
            <person name="Courtney L."/>
            <person name="Porwollik S."/>
            <person name="Ali J."/>
            <person name="Dante M."/>
            <person name="Du F."/>
            <person name="Hou S."/>
            <person name="Layman D."/>
            <person name="Leonard S."/>
            <person name="Nguyen C."/>
            <person name="Scott K."/>
            <person name="Holmes A."/>
            <person name="Grewal N."/>
            <person name="Mulvaney E."/>
            <person name="Ryan E."/>
            <person name="Sun H."/>
            <person name="Florea L."/>
            <person name="Miller W."/>
            <person name="Stoneking T."/>
            <person name="Nhan M."/>
            <person name="Waterston R."/>
            <person name="Wilson R.K."/>
        </authorList>
    </citation>
    <scope>NUCLEOTIDE SEQUENCE [LARGE SCALE GENOMIC DNA]</scope>
    <source>
        <strain>LT2 / SGSC1412 / ATCC 700720</strain>
    </source>
</reference>
<organism>
    <name type="scientific">Salmonella typhimurium (strain LT2 / SGSC1412 / ATCC 700720)</name>
    <dbReference type="NCBI Taxonomy" id="99287"/>
    <lineage>
        <taxon>Bacteria</taxon>
        <taxon>Pseudomonadati</taxon>
        <taxon>Pseudomonadota</taxon>
        <taxon>Gammaproteobacteria</taxon>
        <taxon>Enterobacterales</taxon>
        <taxon>Enterobacteriaceae</taxon>
        <taxon>Salmonella</taxon>
    </lineage>
</organism>
<sequence>MSALVYFSSSSENTHRFMQRLGLPATRIPLNERERIQVDEPYILVVPSYGGGGMAGAVPRQVIRFLNDEHNRARIRGVIASGNRNFGDAWGCAGDVIAQKCGVPWLYRFELMGTQRDIDNVRKGVNEFWQQLPRSA</sequence>
<dbReference type="EMBL" id="X73226">
    <property type="protein sequence ID" value="CAA51698.1"/>
    <property type="molecule type" value="Genomic_DNA"/>
</dbReference>
<dbReference type="EMBL" id="AE006468">
    <property type="protein sequence ID" value="AAL21691.1"/>
    <property type="molecule type" value="Genomic_DNA"/>
</dbReference>
<dbReference type="RefSeq" id="NP_461732.1">
    <property type="nucleotide sequence ID" value="NC_003197.2"/>
</dbReference>
<dbReference type="RefSeq" id="WP_001275401.1">
    <property type="nucleotide sequence ID" value="NC_003197.2"/>
</dbReference>
<dbReference type="SMR" id="Q56109"/>
<dbReference type="STRING" id="99287.STM2806"/>
<dbReference type="PaxDb" id="99287-STM2806"/>
<dbReference type="GeneID" id="1254329"/>
<dbReference type="KEGG" id="stm:STM2806"/>
<dbReference type="PATRIC" id="fig|99287.12.peg.2964"/>
<dbReference type="HOGENOM" id="CLU_114845_0_0_6"/>
<dbReference type="PhylomeDB" id="Q56109"/>
<dbReference type="BioCyc" id="SENT99287:STM2806-MONOMER"/>
<dbReference type="Proteomes" id="UP000001014">
    <property type="component" value="Chromosome"/>
</dbReference>
<dbReference type="GO" id="GO:0010181">
    <property type="term" value="F:FMN binding"/>
    <property type="evidence" value="ECO:0000318"/>
    <property type="project" value="GO_Central"/>
</dbReference>
<dbReference type="GO" id="GO:0036211">
    <property type="term" value="P:protein modification process"/>
    <property type="evidence" value="ECO:0007669"/>
    <property type="project" value="InterPro"/>
</dbReference>
<dbReference type="FunFam" id="3.40.50.360:FF:000005">
    <property type="entry name" value="Protein NrdI"/>
    <property type="match status" value="1"/>
</dbReference>
<dbReference type="Gene3D" id="3.40.50.360">
    <property type="match status" value="1"/>
</dbReference>
<dbReference type="HAMAP" id="MF_00128">
    <property type="entry name" value="NrdI"/>
    <property type="match status" value="1"/>
</dbReference>
<dbReference type="InterPro" id="IPR029039">
    <property type="entry name" value="Flavoprotein-like_sf"/>
</dbReference>
<dbReference type="InterPro" id="IPR020852">
    <property type="entry name" value="RNR_Ib_NrdI_bac"/>
</dbReference>
<dbReference type="InterPro" id="IPR004465">
    <property type="entry name" value="RNR_NrdI"/>
</dbReference>
<dbReference type="NCBIfam" id="TIGR00333">
    <property type="entry name" value="nrdI"/>
    <property type="match status" value="1"/>
</dbReference>
<dbReference type="PANTHER" id="PTHR37297">
    <property type="entry name" value="PROTEIN NRDI"/>
    <property type="match status" value="1"/>
</dbReference>
<dbReference type="PANTHER" id="PTHR37297:SF1">
    <property type="entry name" value="PROTEIN NRDI"/>
    <property type="match status" value="1"/>
</dbReference>
<dbReference type="Pfam" id="PF07972">
    <property type="entry name" value="Flavodoxin_NdrI"/>
    <property type="match status" value="1"/>
</dbReference>
<dbReference type="PIRSF" id="PIRSF005087">
    <property type="entry name" value="NrdI"/>
    <property type="match status" value="1"/>
</dbReference>
<dbReference type="SUPFAM" id="SSF52218">
    <property type="entry name" value="Flavoproteins"/>
    <property type="match status" value="1"/>
</dbReference>
<name>NRDI_SALTY</name>
<comment type="function">
    <text evidence="1">Probably involved in ribonucleotide reductase function.</text>
</comment>
<comment type="similarity">
    <text evidence="2">Belongs to the NrdI family.</text>
</comment>